<comment type="function">
    <text evidence="1">F(1)F(0) ATP synthase produces ATP from ADP in the presence of a proton or sodium gradient. F-type ATPases consist of two structural domains, F(1) containing the extramembraneous catalytic core and F(0) containing the membrane proton channel, linked together by a central stalk and a peripheral stalk. During catalysis, ATP synthesis in the catalytic domain of F(1) is coupled via a rotary mechanism of the central stalk subunits to proton translocation.</text>
</comment>
<comment type="function">
    <text evidence="1">Key component of the F(0) channel; it plays a direct role in translocation across the membrane. A homomeric c-ring of between 10-14 subunits forms the central stalk rotor element with the F(1) delta and epsilon subunits.</text>
</comment>
<comment type="subunit">
    <text evidence="1">F-type ATPases have 2 components, F(1) - the catalytic core - and F(0) - the membrane proton channel. F(1) has five subunits: alpha(3), beta(3), gamma(1), delta(1), epsilon(1). F(0) has three main subunits: a(1), b(2) and c(10-14). The alpha and beta chains form an alternating ring which encloses part of the gamma chain. F(1) is attached to F(0) by a central stalk formed by the gamma and epsilon chains, while a peripheral stalk is formed by the delta and b chains.</text>
</comment>
<comment type="subcellular location">
    <subcellularLocation>
        <location evidence="1">Cell inner membrane</location>
        <topology evidence="1">Multi-pass membrane protein</topology>
    </subcellularLocation>
</comment>
<comment type="similarity">
    <text evidence="1">Belongs to the ATPase C chain family.</text>
</comment>
<gene>
    <name evidence="1" type="primary">atpE</name>
    <name type="ordered locus">YPTB3972</name>
</gene>
<feature type="chain" id="PRO_1000184545" description="ATP synthase subunit c">
    <location>
        <begin position="1"/>
        <end position="79"/>
    </location>
</feature>
<feature type="transmembrane region" description="Helical" evidence="1">
    <location>
        <begin position="11"/>
        <end position="31"/>
    </location>
</feature>
<feature type="transmembrane region" description="Helical" evidence="1">
    <location>
        <begin position="53"/>
        <end position="73"/>
    </location>
</feature>
<feature type="site" description="Reversibly protonated during proton transport" evidence="1">
    <location>
        <position position="61"/>
    </location>
</feature>
<accession>Q663Q3</accession>
<sequence>MENLNMDLLYMAAAVMMGLAAIGAAIGIGILGGKFLEGAARQPDLIPLLRTQFFIVMGLVDAIPMIAVGLGLYVMFAVA</sequence>
<evidence type="ECO:0000255" key="1">
    <source>
        <dbReference type="HAMAP-Rule" id="MF_01396"/>
    </source>
</evidence>
<name>ATPL_YERPS</name>
<protein>
    <recommendedName>
        <fullName evidence="1">ATP synthase subunit c</fullName>
    </recommendedName>
    <alternativeName>
        <fullName evidence="1">ATP synthase F(0) sector subunit c</fullName>
    </alternativeName>
    <alternativeName>
        <fullName evidence="1">F-type ATPase subunit c</fullName>
        <shortName evidence="1">F-ATPase subunit c</shortName>
    </alternativeName>
    <alternativeName>
        <fullName evidence="1">Lipid-binding protein</fullName>
    </alternativeName>
</protein>
<keyword id="KW-0066">ATP synthesis</keyword>
<keyword id="KW-0997">Cell inner membrane</keyword>
<keyword id="KW-1003">Cell membrane</keyword>
<keyword id="KW-0138">CF(0)</keyword>
<keyword id="KW-0375">Hydrogen ion transport</keyword>
<keyword id="KW-0406">Ion transport</keyword>
<keyword id="KW-0446">Lipid-binding</keyword>
<keyword id="KW-0472">Membrane</keyword>
<keyword id="KW-0812">Transmembrane</keyword>
<keyword id="KW-1133">Transmembrane helix</keyword>
<keyword id="KW-0813">Transport</keyword>
<organism>
    <name type="scientific">Yersinia pseudotuberculosis serotype I (strain IP32953)</name>
    <dbReference type="NCBI Taxonomy" id="273123"/>
    <lineage>
        <taxon>Bacteria</taxon>
        <taxon>Pseudomonadati</taxon>
        <taxon>Pseudomonadota</taxon>
        <taxon>Gammaproteobacteria</taxon>
        <taxon>Enterobacterales</taxon>
        <taxon>Yersiniaceae</taxon>
        <taxon>Yersinia</taxon>
    </lineage>
</organism>
<reference key="1">
    <citation type="journal article" date="2004" name="Proc. Natl. Acad. Sci. U.S.A.">
        <title>Insights into the evolution of Yersinia pestis through whole-genome comparison with Yersinia pseudotuberculosis.</title>
        <authorList>
            <person name="Chain P.S.G."/>
            <person name="Carniel E."/>
            <person name="Larimer F.W."/>
            <person name="Lamerdin J."/>
            <person name="Stoutland P.O."/>
            <person name="Regala W.M."/>
            <person name="Georgescu A.M."/>
            <person name="Vergez L.M."/>
            <person name="Land M.L."/>
            <person name="Motin V.L."/>
            <person name="Brubaker R.R."/>
            <person name="Fowler J."/>
            <person name="Hinnebusch J."/>
            <person name="Marceau M."/>
            <person name="Medigue C."/>
            <person name="Simonet M."/>
            <person name="Chenal-Francisque V."/>
            <person name="Souza B."/>
            <person name="Dacheux D."/>
            <person name="Elliott J.M."/>
            <person name="Derbise A."/>
            <person name="Hauser L.J."/>
            <person name="Garcia E."/>
        </authorList>
    </citation>
    <scope>NUCLEOTIDE SEQUENCE [LARGE SCALE GENOMIC DNA]</scope>
    <source>
        <strain>IP32953</strain>
    </source>
</reference>
<dbReference type="EMBL" id="BX936398">
    <property type="protein sequence ID" value="CAH23210.1"/>
    <property type="molecule type" value="Genomic_DNA"/>
</dbReference>
<dbReference type="RefSeq" id="WP_000429386.1">
    <property type="nucleotide sequence ID" value="NZ_CP009712.1"/>
</dbReference>
<dbReference type="SMR" id="Q663Q3"/>
<dbReference type="GeneID" id="98390858"/>
<dbReference type="KEGG" id="ypo:BZ17_2603"/>
<dbReference type="KEGG" id="yps:YPTB3972"/>
<dbReference type="PATRIC" id="fig|273123.14.peg.2729"/>
<dbReference type="Proteomes" id="UP000001011">
    <property type="component" value="Chromosome"/>
</dbReference>
<dbReference type="GO" id="GO:0005886">
    <property type="term" value="C:plasma membrane"/>
    <property type="evidence" value="ECO:0007669"/>
    <property type="project" value="UniProtKB-SubCell"/>
</dbReference>
<dbReference type="GO" id="GO:0045259">
    <property type="term" value="C:proton-transporting ATP synthase complex"/>
    <property type="evidence" value="ECO:0007669"/>
    <property type="project" value="UniProtKB-KW"/>
</dbReference>
<dbReference type="GO" id="GO:0033177">
    <property type="term" value="C:proton-transporting two-sector ATPase complex, proton-transporting domain"/>
    <property type="evidence" value="ECO:0007669"/>
    <property type="project" value="InterPro"/>
</dbReference>
<dbReference type="GO" id="GO:0008289">
    <property type="term" value="F:lipid binding"/>
    <property type="evidence" value="ECO:0007669"/>
    <property type="project" value="UniProtKB-KW"/>
</dbReference>
<dbReference type="GO" id="GO:0046933">
    <property type="term" value="F:proton-transporting ATP synthase activity, rotational mechanism"/>
    <property type="evidence" value="ECO:0007669"/>
    <property type="project" value="UniProtKB-UniRule"/>
</dbReference>
<dbReference type="CDD" id="cd18185">
    <property type="entry name" value="ATP-synt_Fo_c_ATPE"/>
    <property type="match status" value="1"/>
</dbReference>
<dbReference type="FunFam" id="1.20.20.10:FF:000002">
    <property type="entry name" value="ATP synthase subunit c"/>
    <property type="match status" value="1"/>
</dbReference>
<dbReference type="Gene3D" id="1.20.20.10">
    <property type="entry name" value="F1F0 ATP synthase subunit C"/>
    <property type="match status" value="1"/>
</dbReference>
<dbReference type="HAMAP" id="MF_01396">
    <property type="entry name" value="ATP_synth_c_bact"/>
    <property type="match status" value="1"/>
</dbReference>
<dbReference type="InterPro" id="IPR005953">
    <property type="entry name" value="ATP_synth_csu_bac/chlpt"/>
</dbReference>
<dbReference type="InterPro" id="IPR000454">
    <property type="entry name" value="ATP_synth_F0_csu"/>
</dbReference>
<dbReference type="InterPro" id="IPR020537">
    <property type="entry name" value="ATP_synth_F0_csu_DDCD_BS"/>
</dbReference>
<dbReference type="InterPro" id="IPR038662">
    <property type="entry name" value="ATP_synth_F0_csu_sf"/>
</dbReference>
<dbReference type="InterPro" id="IPR002379">
    <property type="entry name" value="ATPase_proteolipid_c-like_dom"/>
</dbReference>
<dbReference type="InterPro" id="IPR035921">
    <property type="entry name" value="F/V-ATP_Csub_sf"/>
</dbReference>
<dbReference type="NCBIfam" id="TIGR01260">
    <property type="entry name" value="ATP_synt_c"/>
    <property type="match status" value="1"/>
</dbReference>
<dbReference type="NCBIfam" id="NF005363">
    <property type="entry name" value="PRK06876.1"/>
    <property type="match status" value="1"/>
</dbReference>
<dbReference type="Pfam" id="PF00137">
    <property type="entry name" value="ATP-synt_C"/>
    <property type="match status" value="1"/>
</dbReference>
<dbReference type="PRINTS" id="PR00124">
    <property type="entry name" value="ATPASEC"/>
</dbReference>
<dbReference type="SUPFAM" id="SSF81333">
    <property type="entry name" value="F1F0 ATP synthase subunit C"/>
    <property type="match status" value="1"/>
</dbReference>
<dbReference type="PROSITE" id="PS00605">
    <property type="entry name" value="ATPASE_C"/>
    <property type="match status" value="1"/>
</dbReference>
<proteinExistence type="inferred from homology"/>